<feature type="chain" id="PRO_0000386483" description="Putative lipid kinase YtlR">
    <location>
        <begin position="1"/>
        <end position="309"/>
    </location>
</feature>
<feature type="domain" description="DAGKc" evidence="2">
    <location>
        <begin position="1"/>
        <end position="134"/>
    </location>
</feature>
<feature type="active site" description="Proton acceptor" evidence="1">
    <location>
        <position position="289"/>
    </location>
</feature>
<feature type="binding site" evidence="2">
    <location>
        <begin position="9"/>
        <end position="13"/>
    </location>
    <ligand>
        <name>ATP</name>
        <dbReference type="ChEBI" id="CHEBI:30616"/>
    </ligand>
</feature>
<feature type="binding site" evidence="2">
    <location>
        <position position="40"/>
    </location>
    <ligand>
        <name>ATP</name>
        <dbReference type="ChEBI" id="CHEBI:30616"/>
    </ligand>
</feature>
<feature type="binding site" evidence="2">
    <location>
        <begin position="69"/>
        <end position="75"/>
    </location>
    <ligand>
        <name>ATP</name>
        <dbReference type="ChEBI" id="CHEBI:30616"/>
    </ligand>
</feature>
<feature type="binding site" evidence="1">
    <location>
        <position position="229"/>
    </location>
    <ligand>
        <name>Mg(2+)</name>
        <dbReference type="ChEBI" id="CHEBI:18420"/>
    </ligand>
</feature>
<feature type="binding site" evidence="1">
    <location>
        <position position="232"/>
    </location>
    <ligand>
        <name>Mg(2+)</name>
        <dbReference type="ChEBI" id="CHEBI:18420"/>
    </ligand>
</feature>
<feature type="binding site" evidence="1">
    <location>
        <position position="234"/>
    </location>
    <ligand>
        <name>Mg(2+)</name>
        <dbReference type="ChEBI" id="CHEBI:18420"/>
    </ligand>
</feature>
<organism>
    <name type="scientific">Bacillus subtilis (strain 168)</name>
    <dbReference type="NCBI Taxonomy" id="224308"/>
    <lineage>
        <taxon>Bacteria</taxon>
        <taxon>Bacillati</taxon>
        <taxon>Bacillota</taxon>
        <taxon>Bacilli</taxon>
        <taxon>Bacillales</taxon>
        <taxon>Bacillaceae</taxon>
        <taxon>Bacillus</taxon>
    </lineage>
</organism>
<evidence type="ECO:0000250" key="1"/>
<evidence type="ECO:0000255" key="2">
    <source>
        <dbReference type="PROSITE-ProRule" id="PRU00783"/>
    </source>
</evidence>
<evidence type="ECO:0000305" key="3"/>
<keyword id="KW-0067">ATP-binding</keyword>
<keyword id="KW-0418">Kinase</keyword>
<keyword id="KW-0444">Lipid biosynthesis</keyword>
<keyword id="KW-0443">Lipid metabolism</keyword>
<keyword id="KW-0460">Magnesium</keyword>
<keyword id="KW-0479">Metal-binding</keyword>
<keyword id="KW-0547">Nucleotide-binding</keyword>
<keyword id="KW-0594">Phospholipid biosynthesis</keyword>
<keyword id="KW-1208">Phospholipid metabolism</keyword>
<keyword id="KW-1185">Reference proteome</keyword>
<keyword id="KW-0808">Transferase</keyword>
<gene>
    <name type="primary">ytlR</name>
    <name type="ordered locus">BSU29940</name>
</gene>
<sequence>MSHWFFIINPTAGHRNGLRVWKSIQKELIKRKVEHRSFLTEHPGHAEVLARQISTIQEYKLKRLIVIGGDGTMHEVVNGLKDVDDIELSFVPAGAYNDFSRGFSIKKIDLIQEIKKVKRPLTRTFHLGSVNFLQDKSQILYFMNHIGIGFDAYVNKKAMEFPLRRVFLFLRLRFLVYPLSHLHASATFKPFTLACTTEDETREFHDVWFAVVSNHPFYGGGMKAAPLANPREKTFDIVIVENQPFLKKYWLLCLMAFGKHTKMDGVTMFKAKDITFYTKDKIPFHADGEIMGTTPFRLASSPSPLRIKT</sequence>
<protein>
    <recommendedName>
        <fullName>Putative lipid kinase YtlR</fullName>
        <ecNumber>2.7.1.-</ecNumber>
    </recommendedName>
</protein>
<dbReference type="EC" id="2.7.1.-"/>
<dbReference type="EMBL" id="AF008220">
    <property type="protein sequence ID" value="AAC00282.1"/>
    <property type="molecule type" value="Genomic_DNA"/>
</dbReference>
<dbReference type="EMBL" id="AL009126">
    <property type="protein sequence ID" value="CAB14972.1"/>
    <property type="molecule type" value="Genomic_DNA"/>
</dbReference>
<dbReference type="PIR" id="H69995">
    <property type="entry name" value="H69995"/>
</dbReference>
<dbReference type="RefSeq" id="NP_390872.1">
    <property type="nucleotide sequence ID" value="NC_000964.3"/>
</dbReference>
<dbReference type="RefSeq" id="WP_003229243.1">
    <property type="nucleotide sequence ID" value="NZ_OZ025638.1"/>
</dbReference>
<dbReference type="SMR" id="O34799"/>
<dbReference type="FunCoup" id="O34799">
    <property type="interactions" value="6"/>
</dbReference>
<dbReference type="STRING" id="224308.BSU29940"/>
<dbReference type="PaxDb" id="224308-BSU29940"/>
<dbReference type="EnsemblBacteria" id="CAB14972">
    <property type="protein sequence ID" value="CAB14972"/>
    <property type="gene ID" value="BSU_29940"/>
</dbReference>
<dbReference type="GeneID" id="937289"/>
<dbReference type="KEGG" id="bsu:BSU29940"/>
<dbReference type="PATRIC" id="fig|224308.179.peg.3252"/>
<dbReference type="eggNOG" id="COG1597">
    <property type="taxonomic scope" value="Bacteria"/>
</dbReference>
<dbReference type="InParanoid" id="O34799"/>
<dbReference type="OrthoDB" id="9786026at2"/>
<dbReference type="PhylomeDB" id="O34799"/>
<dbReference type="BioCyc" id="BSUB:BSU29940-MONOMER"/>
<dbReference type="Proteomes" id="UP000001570">
    <property type="component" value="Chromosome"/>
</dbReference>
<dbReference type="GO" id="GO:0005524">
    <property type="term" value="F:ATP binding"/>
    <property type="evidence" value="ECO:0007669"/>
    <property type="project" value="UniProtKB-KW"/>
</dbReference>
<dbReference type="GO" id="GO:0004143">
    <property type="term" value="F:ATP-dependent diacylglycerol kinase activity"/>
    <property type="evidence" value="ECO:0000318"/>
    <property type="project" value="GO_Central"/>
</dbReference>
<dbReference type="GO" id="GO:0046872">
    <property type="term" value="F:metal ion binding"/>
    <property type="evidence" value="ECO:0007669"/>
    <property type="project" value="UniProtKB-KW"/>
</dbReference>
<dbReference type="GO" id="GO:0008654">
    <property type="term" value="P:phospholipid biosynthetic process"/>
    <property type="evidence" value="ECO:0007669"/>
    <property type="project" value="UniProtKB-KW"/>
</dbReference>
<dbReference type="Gene3D" id="2.60.200.40">
    <property type="match status" value="1"/>
</dbReference>
<dbReference type="Gene3D" id="3.40.50.10330">
    <property type="entry name" value="Probable inorganic polyphosphate/atp-NAD kinase, domain 1"/>
    <property type="match status" value="1"/>
</dbReference>
<dbReference type="InterPro" id="IPR017438">
    <property type="entry name" value="ATP-NAD_kinase_N"/>
</dbReference>
<dbReference type="InterPro" id="IPR005218">
    <property type="entry name" value="Diacylglycerol/lipid_kinase"/>
</dbReference>
<dbReference type="InterPro" id="IPR001206">
    <property type="entry name" value="Diacylglycerol_kinase_cat_dom"/>
</dbReference>
<dbReference type="InterPro" id="IPR050187">
    <property type="entry name" value="Lipid_Phosphate_FormReg"/>
</dbReference>
<dbReference type="InterPro" id="IPR016064">
    <property type="entry name" value="NAD/diacylglycerol_kinase_sf"/>
</dbReference>
<dbReference type="InterPro" id="IPR045540">
    <property type="entry name" value="YegS/DAGK_C"/>
</dbReference>
<dbReference type="NCBIfam" id="TIGR00147">
    <property type="entry name" value="YegS/Rv2252/BmrU family lipid kinase"/>
    <property type="match status" value="1"/>
</dbReference>
<dbReference type="PANTHER" id="PTHR12358:SF106">
    <property type="entry name" value="LIPID KINASE YEGS"/>
    <property type="match status" value="1"/>
</dbReference>
<dbReference type="PANTHER" id="PTHR12358">
    <property type="entry name" value="SPHINGOSINE KINASE"/>
    <property type="match status" value="1"/>
</dbReference>
<dbReference type="Pfam" id="PF00781">
    <property type="entry name" value="DAGK_cat"/>
    <property type="match status" value="1"/>
</dbReference>
<dbReference type="Pfam" id="PF19279">
    <property type="entry name" value="YegS_C"/>
    <property type="match status" value="1"/>
</dbReference>
<dbReference type="SMART" id="SM00046">
    <property type="entry name" value="DAGKc"/>
    <property type="match status" value="1"/>
</dbReference>
<dbReference type="SUPFAM" id="SSF111331">
    <property type="entry name" value="NAD kinase/diacylglycerol kinase-like"/>
    <property type="match status" value="1"/>
</dbReference>
<dbReference type="PROSITE" id="PS50146">
    <property type="entry name" value="DAGK"/>
    <property type="match status" value="1"/>
</dbReference>
<comment type="function">
    <text>May catalyze the ATP-dependent phosphorylation of lipids other than diacylglycerol (DAG). In fact, is not able to exhibit diacylglycerol kinase activity in vitro.</text>
</comment>
<comment type="cofactor">
    <cofactor evidence="1">
        <name>Mg(2+)</name>
        <dbReference type="ChEBI" id="CHEBI:18420"/>
    </cofactor>
    <text evidence="1">Binds 1 Mg(2+) ion per subunit. This ion appears to have a structural role and is required for catalytic activity.</text>
</comment>
<comment type="similarity">
    <text evidence="3">Belongs to the diacylglycerol/lipid kinase family.</text>
</comment>
<accession>O34799</accession>
<accession>Q795S5</accession>
<name>YTLR_BACSU</name>
<reference key="1">
    <citation type="journal article" date="1997" name="Microbiology">
        <title>Sequencing and functional annotation of the Bacillus subtilis genes in the 200 kb rrnB-dnaB region.</title>
        <authorList>
            <person name="Lapidus A."/>
            <person name="Galleron N."/>
            <person name="Sorokin A."/>
            <person name="Ehrlich S.D."/>
        </authorList>
    </citation>
    <scope>NUCLEOTIDE SEQUENCE [GENOMIC DNA]</scope>
    <source>
        <strain>168</strain>
    </source>
</reference>
<reference key="2">
    <citation type="journal article" date="1997" name="Nature">
        <title>The complete genome sequence of the Gram-positive bacterium Bacillus subtilis.</title>
        <authorList>
            <person name="Kunst F."/>
            <person name="Ogasawara N."/>
            <person name="Moszer I."/>
            <person name="Albertini A.M."/>
            <person name="Alloni G."/>
            <person name="Azevedo V."/>
            <person name="Bertero M.G."/>
            <person name="Bessieres P."/>
            <person name="Bolotin A."/>
            <person name="Borchert S."/>
            <person name="Borriss R."/>
            <person name="Boursier L."/>
            <person name="Brans A."/>
            <person name="Braun M."/>
            <person name="Brignell S.C."/>
            <person name="Bron S."/>
            <person name="Brouillet S."/>
            <person name="Bruschi C.V."/>
            <person name="Caldwell B."/>
            <person name="Capuano V."/>
            <person name="Carter N.M."/>
            <person name="Choi S.-K."/>
            <person name="Codani J.-J."/>
            <person name="Connerton I.F."/>
            <person name="Cummings N.J."/>
            <person name="Daniel R.A."/>
            <person name="Denizot F."/>
            <person name="Devine K.M."/>
            <person name="Duesterhoeft A."/>
            <person name="Ehrlich S.D."/>
            <person name="Emmerson P.T."/>
            <person name="Entian K.-D."/>
            <person name="Errington J."/>
            <person name="Fabret C."/>
            <person name="Ferrari E."/>
            <person name="Foulger D."/>
            <person name="Fritz C."/>
            <person name="Fujita M."/>
            <person name="Fujita Y."/>
            <person name="Fuma S."/>
            <person name="Galizzi A."/>
            <person name="Galleron N."/>
            <person name="Ghim S.-Y."/>
            <person name="Glaser P."/>
            <person name="Goffeau A."/>
            <person name="Golightly E.J."/>
            <person name="Grandi G."/>
            <person name="Guiseppi G."/>
            <person name="Guy B.J."/>
            <person name="Haga K."/>
            <person name="Haiech J."/>
            <person name="Harwood C.R."/>
            <person name="Henaut A."/>
            <person name="Hilbert H."/>
            <person name="Holsappel S."/>
            <person name="Hosono S."/>
            <person name="Hullo M.-F."/>
            <person name="Itaya M."/>
            <person name="Jones L.-M."/>
            <person name="Joris B."/>
            <person name="Karamata D."/>
            <person name="Kasahara Y."/>
            <person name="Klaerr-Blanchard M."/>
            <person name="Klein C."/>
            <person name="Kobayashi Y."/>
            <person name="Koetter P."/>
            <person name="Koningstein G."/>
            <person name="Krogh S."/>
            <person name="Kumano M."/>
            <person name="Kurita K."/>
            <person name="Lapidus A."/>
            <person name="Lardinois S."/>
            <person name="Lauber J."/>
            <person name="Lazarevic V."/>
            <person name="Lee S.-M."/>
            <person name="Levine A."/>
            <person name="Liu H."/>
            <person name="Masuda S."/>
            <person name="Mauel C."/>
            <person name="Medigue C."/>
            <person name="Medina N."/>
            <person name="Mellado R.P."/>
            <person name="Mizuno M."/>
            <person name="Moestl D."/>
            <person name="Nakai S."/>
            <person name="Noback M."/>
            <person name="Noone D."/>
            <person name="O'Reilly M."/>
            <person name="Ogawa K."/>
            <person name="Ogiwara A."/>
            <person name="Oudega B."/>
            <person name="Park S.-H."/>
            <person name="Parro V."/>
            <person name="Pohl T.M."/>
            <person name="Portetelle D."/>
            <person name="Porwollik S."/>
            <person name="Prescott A.M."/>
            <person name="Presecan E."/>
            <person name="Pujic P."/>
            <person name="Purnelle B."/>
            <person name="Rapoport G."/>
            <person name="Rey M."/>
            <person name="Reynolds S."/>
            <person name="Rieger M."/>
            <person name="Rivolta C."/>
            <person name="Rocha E."/>
            <person name="Roche B."/>
            <person name="Rose M."/>
            <person name="Sadaie Y."/>
            <person name="Sato T."/>
            <person name="Scanlan E."/>
            <person name="Schleich S."/>
            <person name="Schroeter R."/>
            <person name="Scoffone F."/>
            <person name="Sekiguchi J."/>
            <person name="Sekowska A."/>
            <person name="Seror S.J."/>
            <person name="Serror P."/>
            <person name="Shin B.-S."/>
            <person name="Soldo B."/>
            <person name="Sorokin A."/>
            <person name="Tacconi E."/>
            <person name="Takagi T."/>
            <person name="Takahashi H."/>
            <person name="Takemaru K."/>
            <person name="Takeuchi M."/>
            <person name="Tamakoshi A."/>
            <person name="Tanaka T."/>
            <person name="Terpstra P."/>
            <person name="Tognoni A."/>
            <person name="Tosato V."/>
            <person name="Uchiyama S."/>
            <person name="Vandenbol M."/>
            <person name="Vannier F."/>
            <person name="Vassarotti A."/>
            <person name="Viari A."/>
            <person name="Wambutt R."/>
            <person name="Wedler E."/>
            <person name="Wedler H."/>
            <person name="Weitzenegger T."/>
            <person name="Winters P."/>
            <person name="Wipat A."/>
            <person name="Yamamoto H."/>
            <person name="Yamane K."/>
            <person name="Yasumoto K."/>
            <person name="Yata K."/>
            <person name="Yoshida K."/>
            <person name="Yoshikawa H.-F."/>
            <person name="Zumstein E."/>
            <person name="Yoshikawa H."/>
            <person name="Danchin A."/>
        </authorList>
    </citation>
    <scope>NUCLEOTIDE SEQUENCE [LARGE SCALE GENOMIC DNA]</scope>
    <source>
        <strain>168</strain>
    </source>
</reference>
<reference key="3">
    <citation type="journal article" date="2007" name="J. Biol. Chem.">
        <title>Identification of a soluble diacylglycerol kinase required for lipoteichoic acid production in Bacillus subtilis.</title>
        <authorList>
            <person name="Jerga A."/>
            <person name="Lu Y.-J."/>
            <person name="Schujman G.E."/>
            <person name="de Mendoza D."/>
            <person name="Rock C.O."/>
        </authorList>
    </citation>
    <scope>LACK OF FUNCTION AS A DIACYLGLYCEROL KINASE</scope>
</reference>
<proteinExistence type="evidence at protein level"/>